<feature type="chain" id="PRO_0000067690" description="Phytoene desaturase (neurosporene-forming)">
    <location>
        <begin position="1"/>
        <end position="524"/>
    </location>
</feature>
<feature type="region of interest" description="Disordered" evidence="2">
    <location>
        <begin position="500"/>
        <end position="524"/>
    </location>
</feature>
<feature type="compositionally biased region" description="Low complexity" evidence="2">
    <location>
        <begin position="507"/>
        <end position="524"/>
    </location>
</feature>
<feature type="binding site" evidence="1">
    <location>
        <begin position="12"/>
        <end position="45"/>
    </location>
    <ligand>
        <name>FAD</name>
        <dbReference type="ChEBI" id="CHEBI:57692"/>
    </ligand>
</feature>
<dbReference type="EC" id="1.3.99.28"/>
<dbReference type="EMBL" id="X52291">
    <property type="protein sequence ID" value="CAA36533.1"/>
    <property type="molecule type" value="Genomic_DNA"/>
</dbReference>
<dbReference type="EMBL" id="Z11165">
    <property type="protein sequence ID" value="CAA77540.1"/>
    <property type="molecule type" value="Genomic_DNA"/>
</dbReference>
<dbReference type="EMBL" id="J04969">
    <property type="protein sequence ID" value="AAA50313.1"/>
    <property type="molecule type" value="Genomic_DNA"/>
</dbReference>
<dbReference type="EMBL" id="CP001312">
    <property type="protein sequence ID" value="ADE84444.1"/>
    <property type="molecule type" value="Genomic_DNA"/>
</dbReference>
<dbReference type="PIR" id="A32617">
    <property type="entry name" value="A32617"/>
</dbReference>
<dbReference type="RefSeq" id="WP_013066423.1">
    <property type="nucleotide sequence ID" value="NC_014034.1"/>
</dbReference>
<dbReference type="SMR" id="P17054"/>
<dbReference type="STRING" id="272942.RCAP_rcc00679"/>
<dbReference type="GeneID" id="31489625"/>
<dbReference type="KEGG" id="rcp:RCAP_rcc00679"/>
<dbReference type="eggNOG" id="COG1233">
    <property type="taxonomic scope" value="Bacteria"/>
</dbReference>
<dbReference type="HOGENOM" id="CLU_019722_2_1_5"/>
<dbReference type="OrthoDB" id="9774675at2"/>
<dbReference type="BioCyc" id="MetaCyc:MONOMER-14931"/>
<dbReference type="BRENDA" id="1.3.99.28">
    <property type="organism ID" value="5381"/>
</dbReference>
<dbReference type="SABIO-RK" id="P17054"/>
<dbReference type="Proteomes" id="UP000002361">
    <property type="component" value="Chromosome"/>
</dbReference>
<dbReference type="GO" id="GO:0071949">
    <property type="term" value="F:FAD binding"/>
    <property type="evidence" value="ECO:0000314"/>
    <property type="project" value="UniProtKB"/>
</dbReference>
<dbReference type="GO" id="GO:0016627">
    <property type="term" value="F:oxidoreductase activity, acting on the CH-CH group of donors"/>
    <property type="evidence" value="ECO:0000314"/>
    <property type="project" value="UniProtKB"/>
</dbReference>
<dbReference type="GO" id="GO:0016120">
    <property type="term" value="P:carotene biosynthetic process"/>
    <property type="evidence" value="ECO:0000314"/>
    <property type="project" value="UniProtKB"/>
</dbReference>
<dbReference type="GO" id="GO:0016117">
    <property type="term" value="P:carotenoid biosynthetic process"/>
    <property type="evidence" value="ECO:0007669"/>
    <property type="project" value="UniProtKB-KW"/>
</dbReference>
<dbReference type="FunFam" id="3.50.50.60:FF:000378">
    <property type="entry name" value="Phytoene desaturase"/>
    <property type="match status" value="1"/>
</dbReference>
<dbReference type="FunFam" id="3.50.50.60:FF:000413">
    <property type="entry name" value="Phytoene desaturase (lycopene-forming)"/>
    <property type="match status" value="1"/>
</dbReference>
<dbReference type="Gene3D" id="3.50.50.60">
    <property type="entry name" value="FAD/NAD(P)-binding domain"/>
    <property type="match status" value="2"/>
</dbReference>
<dbReference type="InterPro" id="IPR002937">
    <property type="entry name" value="Amino_oxidase"/>
</dbReference>
<dbReference type="InterPro" id="IPR014105">
    <property type="entry name" value="Carotenoid/retinoid_OxRdtase"/>
</dbReference>
<dbReference type="InterPro" id="IPR036188">
    <property type="entry name" value="FAD/NAD-bd_sf"/>
</dbReference>
<dbReference type="InterPro" id="IPR008150">
    <property type="entry name" value="Phytoene_DH_bac_CS"/>
</dbReference>
<dbReference type="NCBIfam" id="TIGR02734">
    <property type="entry name" value="crtI_fam"/>
    <property type="match status" value="1"/>
</dbReference>
<dbReference type="PANTHER" id="PTHR43734:SF3">
    <property type="entry name" value="B-CAROTENE KETOLASE"/>
    <property type="match status" value="1"/>
</dbReference>
<dbReference type="PANTHER" id="PTHR43734">
    <property type="entry name" value="PHYTOENE DESATURASE"/>
    <property type="match status" value="1"/>
</dbReference>
<dbReference type="Pfam" id="PF01593">
    <property type="entry name" value="Amino_oxidase"/>
    <property type="match status" value="1"/>
</dbReference>
<dbReference type="SUPFAM" id="SSF51905">
    <property type="entry name" value="FAD/NAD(P)-binding domain"/>
    <property type="match status" value="1"/>
</dbReference>
<dbReference type="PROSITE" id="PS00982">
    <property type="entry name" value="PHYTOENE_DH"/>
    <property type="match status" value="1"/>
</dbReference>
<reference key="1">
    <citation type="journal article" date="1989" name="Mol. Gen. Genet.">
        <title>Nucleotide sequence, organization, and nature of the protein products of the carotenoid biosynthesis gene cluster of Rhodobacter capsulatus.</title>
        <authorList>
            <person name="Armstrong G.A."/>
            <person name="Alberti M."/>
            <person name="Leach F."/>
            <person name="Hearst J.E."/>
        </authorList>
    </citation>
    <scope>NUCLEOTIDE SEQUENCE [GENOMIC DNA]</scope>
    <source>
        <strain>ATCC BAA-309 / NBRC 16581 / SB1003</strain>
    </source>
</reference>
<reference key="2">
    <citation type="journal article" date="1989" name="J. Biol. Chem.">
        <title>Carotenoid biosynthesis in photosynthetic bacteria. Genetic characterization of the Rhodobacter capsulatus CrtI protein.</title>
        <authorList>
            <person name="Bartley G.E."/>
            <person name="Scolnik P.A."/>
        </authorList>
    </citation>
    <scope>NUCLEOTIDE SEQUENCE [GENOMIC DNA]</scope>
    <source>
        <strain>ATCC BAA-309 / NBRC 16581 / SB1003</strain>
    </source>
</reference>
<reference key="3">
    <citation type="journal article" date="1989" name="J. Biol. Chem.">
        <authorList>
            <person name="Bartley G.E."/>
            <person name="Scolnik P.A."/>
        </authorList>
    </citation>
    <scope>ERRATUM OF PUBMED:2546948</scope>
</reference>
<reference key="4">
    <citation type="journal article" date="2010" name="J. Bacteriol.">
        <title>Complete genome sequence of the photosynthetic purple nonsulfur bacterium Rhodobacter capsulatus SB 1003.</title>
        <authorList>
            <person name="Strnad H."/>
            <person name="Lapidus A."/>
            <person name="Paces J."/>
            <person name="Ulbrich P."/>
            <person name="Vlcek C."/>
            <person name="Paces V."/>
            <person name="Haselkorn R."/>
        </authorList>
    </citation>
    <scope>NUCLEOTIDE SEQUENCE [LARGE SCALE GENOMIC DNA]</scope>
    <source>
        <strain>ATCC BAA-309 / NBRC 16581 / SB1003</strain>
    </source>
</reference>
<reference key="5">
    <citation type="journal article" date="1990" name="J. Biol. Chem.">
        <title>Carotenoid desaturases from Rhodobacter capsulatus and Neurospora crassa are structurally and functionally conserved and contain domains homologous to flavoprotein disulfide oxidoreductases.</title>
        <authorList>
            <person name="Bartley G.E."/>
            <person name="Schmidhauser T.J."/>
            <person name="Yanofsky C."/>
            <person name="Scolnik P.A."/>
        </authorList>
    </citation>
    <scope>SIMILARITY TO CAROTENOID DESATURASES</scope>
</reference>
<reference key="6">
    <citation type="journal article" date="1996" name="J. Biochem.">
        <title>Purification in an active state and properties of the 3-step phytoene desaturase from Rhodobacter capsulatus overexpressed in Escherichia coli.</title>
        <authorList>
            <person name="Raisig A."/>
            <person name="Bartley G."/>
            <person name="Scolnik P."/>
            <person name="Sandmann G."/>
        </authorList>
    </citation>
    <scope>FUNCTION</scope>
    <scope>CATALYTIC ACTIVITY</scope>
    <scope>SUBSTRATE SPECIFICITY</scope>
    <scope>COFACTOR</scope>
    <scope>KINETIC PARAMETERS</scope>
    <scope>ACTIVITY REGULATION</scope>
    <source>
        <strain>ATCC BAA-309 / NBRC 16581 / SB1003</strain>
    </source>
</reference>
<protein>
    <recommendedName>
        <fullName>Phytoene desaturase (neurosporene-forming)</fullName>
        <ecNumber>1.3.99.28</ecNumber>
    </recommendedName>
    <alternativeName>
        <fullName>3-step phytoene desaturase</fullName>
    </alternativeName>
    <alternativeName>
        <fullName>Phytoene dehydrogenase</fullName>
    </alternativeName>
</protein>
<organism>
    <name type="scientific">Rhodobacter capsulatus (strain ATCC BAA-309 / NBRC 16581 / SB1003)</name>
    <dbReference type="NCBI Taxonomy" id="272942"/>
    <lineage>
        <taxon>Bacteria</taxon>
        <taxon>Pseudomonadati</taxon>
        <taxon>Pseudomonadota</taxon>
        <taxon>Alphaproteobacteria</taxon>
        <taxon>Rhodobacterales</taxon>
        <taxon>Rhodobacter group</taxon>
        <taxon>Rhodobacter</taxon>
    </lineage>
</organism>
<accession>P17054</accession>
<accession>D5AP72</accession>
<proteinExistence type="evidence at protein level"/>
<sequence length="524" mass="57978">MSKNTEGMGRAVVIGAGLGGLAAAMRLGAKGYKVTVVDRLDRPGGRGSSITKGGHRFDLGPTIVTVPDRLRELWADCGRDFDKDVSLVPMEPFYTIDFPDGEKYTAYGDDAKVKAEVARISPGDVEGFRHFMWDAKARYEFGYENLGRKPMSKLWDLIKVLPTFGWLRADRSVYGHAKKMVKDDHLRFALSFHPLFIGGDPFHVTSMYILVSQLEKKFGVHYAIGGVQAIADAMAKVITDQGGEMRLNTEVDEILVSRDGKATGIRLMDGTELPAQVVVSNADAGHTYKRLLRNRDRWRWTDEKLDKKRWSMGLFVWYFGTKGTAKMWKDVGHHTVVVGPRYKEHVQDIFIKGELAEDMSLYVHRPSVTDPTAAPKGDDTFYVLSPVPNLGFDNGVDWSVEAEKYKAKVLKVIEERLLPGVAEKITEEVVFTPETFRDRYLSPLGAGFSLEPRILQSAWFRPHNASEEVDGLYLVGAGTHPGAGVPSVIGSGELVAQMIPDAPKPETPAAAAPKARTPRAKAAQ</sequence>
<keyword id="KW-0125">Carotenoid biosynthesis</keyword>
<keyword id="KW-0274">FAD</keyword>
<keyword id="KW-0285">Flavoprotein</keyword>
<keyword id="KW-0560">Oxidoreductase</keyword>
<keyword id="KW-1185">Reference proteome</keyword>
<evidence type="ECO:0000255" key="1"/>
<evidence type="ECO:0000256" key="2">
    <source>
        <dbReference type="SAM" id="MobiDB-lite"/>
    </source>
</evidence>
<evidence type="ECO:0000269" key="3">
    <source>
    </source>
</evidence>
<evidence type="ECO:0000305" key="4"/>
<gene>
    <name type="primary">crtI</name>
    <name type="ordered locus">RCAP_rcc00679</name>
</gene>
<name>CRTI_RHOCB</name>
<comment type="function">
    <text evidence="3">Converts phytoene into all-trans-neurosporene as the major product, via the intermediary of phytofluene and zeta-carotene, by the introduction of three double bonds. Both intermediates, phytofluene and zeta-carotene, can be used as substrates and converted to neurosporene. 1,2-epoxy phytoene is also a suitable substrate whereas the C30 diapophytoene is not.</text>
</comment>
<comment type="catalytic activity">
    <reaction evidence="3">
        <text>15-cis-phytoene + 3 A = all-trans-neurosporene + 3 AH2</text>
        <dbReference type="Rhea" id="RHEA:30599"/>
        <dbReference type="ChEBI" id="CHEBI:13193"/>
        <dbReference type="ChEBI" id="CHEBI:16833"/>
        <dbReference type="ChEBI" id="CHEBI:17499"/>
        <dbReference type="ChEBI" id="CHEBI:27787"/>
        <dbReference type="EC" id="1.3.99.28"/>
    </reaction>
</comment>
<comment type="cofactor">
    <cofactor evidence="3">
        <name>FAD</name>
        <dbReference type="ChEBI" id="CHEBI:57692"/>
    </cofactor>
</comment>
<comment type="activity regulation">
    <text evidence="3">Is inhibited by diphenylamine (DPA). Is also slightly inhibited by NAD, NADP or ATP in the presence of FAD.</text>
</comment>
<comment type="biophysicochemical properties">
    <kinetics>
        <KM evidence="3">33.3 uM for phytoene</KM>
        <KM evidence="3">16.6 uM for zeta-carotene</KM>
        <KM evidence="3">4.9 uM for FAD</KM>
        <Vmax evidence="3">0.169 nmol/h/mg enzyme with phytoene as substrate</Vmax>
        <Vmax evidence="3">0.086 nmol/h/mg enzyme with zeta-carotene as substrate</Vmax>
    </kinetics>
</comment>
<comment type="pathway">
    <text>Carotenoid biosynthesis.</text>
</comment>
<comment type="similarity">
    <text evidence="4">Belongs to the carotenoid/retinoid oxidoreductase family.</text>
</comment>